<evidence type="ECO:0000250" key="1"/>
<evidence type="ECO:0000255" key="2"/>
<evidence type="ECO:0000255" key="3">
    <source>
        <dbReference type="PROSITE-ProRule" id="PRU00274"/>
    </source>
</evidence>
<evidence type="ECO:0000269" key="4">
    <source>
    </source>
</evidence>
<evidence type="ECO:0000269" key="5">
    <source>
    </source>
</evidence>
<evidence type="ECO:0000269" key="6">
    <source>
    </source>
</evidence>
<evidence type="ECO:0000269" key="7">
    <source>
    </source>
</evidence>
<evidence type="ECO:0000269" key="8">
    <source>
    </source>
</evidence>
<evidence type="ECO:0000305" key="9"/>
<evidence type="ECO:0000305" key="10">
    <source>
    </source>
</evidence>
<name>CEL3B_HUMAN</name>
<sequence>MMLRLLSSLLLVAVASGYGPPSSRPSSRVVNGEDAVPYSWPWQVSLQYEKSGSFYHTCGGSLIAPDWVVTAGHCISSSRTYQVVLGEYDRAVKEGPEQVIPINSGDLFVHPLWNRSCVACGNDIALIKLSRSAQLGDAVQLASLPPAGDILPNETPCYITGWGRLYTNGPLPDKLQEALLPVVDYEHCSRWNWWGSSVKKTMVCAGGDIRSGCNGDSGGPLNCPTEDGGWQVHGVTSFVSAFGCNTRRKPTVFTRVSAFIDWIEETIASH</sequence>
<reference key="1">
    <citation type="journal article" date="1988" name="J. Biol. Chem.">
        <title>Identification of a novel class of elastase isozyme, human pancreatic elastase III, by cDNA and genomic gene cloning.</title>
        <authorList>
            <person name="Tani T."/>
            <person name="Ohsumi J."/>
            <person name="Mita K."/>
            <person name="Takiguchi Y."/>
        </authorList>
    </citation>
    <scope>NUCLEOTIDE SEQUENCE [MRNA]</scope>
    <source>
        <tissue>Pancreas</tissue>
    </source>
</reference>
<reference key="2">
    <citation type="journal article" date="2004" name="Nat. Genet.">
        <title>Complete sequencing and characterization of 21,243 full-length human cDNAs.</title>
        <authorList>
            <person name="Ota T."/>
            <person name="Suzuki Y."/>
            <person name="Nishikawa T."/>
            <person name="Otsuki T."/>
            <person name="Sugiyama T."/>
            <person name="Irie R."/>
            <person name="Wakamatsu A."/>
            <person name="Hayashi K."/>
            <person name="Sato H."/>
            <person name="Nagai K."/>
            <person name="Kimura K."/>
            <person name="Makita H."/>
            <person name="Sekine M."/>
            <person name="Obayashi M."/>
            <person name="Nishi T."/>
            <person name="Shibahara T."/>
            <person name="Tanaka T."/>
            <person name="Ishii S."/>
            <person name="Yamamoto J."/>
            <person name="Saito K."/>
            <person name="Kawai Y."/>
            <person name="Isono Y."/>
            <person name="Nakamura Y."/>
            <person name="Nagahari K."/>
            <person name="Murakami K."/>
            <person name="Yasuda T."/>
            <person name="Iwayanagi T."/>
            <person name="Wagatsuma M."/>
            <person name="Shiratori A."/>
            <person name="Sudo H."/>
            <person name="Hosoiri T."/>
            <person name="Kaku Y."/>
            <person name="Kodaira H."/>
            <person name="Kondo H."/>
            <person name="Sugawara M."/>
            <person name="Takahashi M."/>
            <person name="Kanda K."/>
            <person name="Yokoi T."/>
            <person name="Furuya T."/>
            <person name="Kikkawa E."/>
            <person name="Omura Y."/>
            <person name="Abe K."/>
            <person name="Kamihara K."/>
            <person name="Katsuta N."/>
            <person name="Sato K."/>
            <person name="Tanikawa M."/>
            <person name="Yamazaki M."/>
            <person name="Ninomiya K."/>
            <person name="Ishibashi T."/>
            <person name="Yamashita H."/>
            <person name="Murakawa K."/>
            <person name="Fujimori K."/>
            <person name="Tanai H."/>
            <person name="Kimata M."/>
            <person name="Watanabe M."/>
            <person name="Hiraoka S."/>
            <person name="Chiba Y."/>
            <person name="Ishida S."/>
            <person name="Ono Y."/>
            <person name="Takiguchi S."/>
            <person name="Watanabe S."/>
            <person name="Yosida M."/>
            <person name="Hotuta T."/>
            <person name="Kusano J."/>
            <person name="Kanehori K."/>
            <person name="Takahashi-Fujii A."/>
            <person name="Hara H."/>
            <person name="Tanase T.-O."/>
            <person name="Nomura Y."/>
            <person name="Togiya S."/>
            <person name="Komai F."/>
            <person name="Hara R."/>
            <person name="Takeuchi K."/>
            <person name="Arita M."/>
            <person name="Imose N."/>
            <person name="Musashino K."/>
            <person name="Yuuki H."/>
            <person name="Oshima A."/>
            <person name="Sasaki N."/>
            <person name="Aotsuka S."/>
            <person name="Yoshikawa Y."/>
            <person name="Matsunawa H."/>
            <person name="Ichihara T."/>
            <person name="Shiohata N."/>
            <person name="Sano S."/>
            <person name="Moriya S."/>
            <person name="Momiyama H."/>
            <person name="Satoh N."/>
            <person name="Takami S."/>
            <person name="Terashima Y."/>
            <person name="Suzuki O."/>
            <person name="Nakagawa S."/>
            <person name="Senoh A."/>
            <person name="Mizoguchi H."/>
            <person name="Goto Y."/>
            <person name="Shimizu F."/>
            <person name="Wakebe H."/>
            <person name="Hishigaki H."/>
            <person name="Watanabe T."/>
            <person name="Sugiyama A."/>
            <person name="Takemoto M."/>
            <person name="Kawakami B."/>
            <person name="Yamazaki M."/>
            <person name="Watanabe K."/>
            <person name="Kumagai A."/>
            <person name="Itakura S."/>
            <person name="Fukuzumi Y."/>
            <person name="Fujimori Y."/>
            <person name="Komiyama M."/>
            <person name="Tashiro H."/>
            <person name="Tanigami A."/>
            <person name="Fujiwara T."/>
            <person name="Ono T."/>
            <person name="Yamada K."/>
            <person name="Fujii Y."/>
            <person name="Ozaki K."/>
            <person name="Hirao M."/>
            <person name="Ohmori Y."/>
            <person name="Kawabata A."/>
            <person name="Hikiji T."/>
            <person name="Kobatake N."/>
            <person name="Inagaki H."/>
            <person name="Ikema Y."/>
            <person name="Okamoto S."/>
            <person name="Okitani R."/>
            <person name="Kawakami T."/>
            <person name="Noguchi S."/>
            <person name="Itoh T."/>
            <person name="Shigeta K."/>
            <person name="Senba T."/>
            <person name="Matsumura K."/>
            <person name="Nakajima Y."/>
            <person name="Mizuno T."/>
            <person name="Morinaga M."/>
            <person name="Sasaki M."/>
            <person name="Togashi T."/>
            <person name="Oyama M."/>
            <person name="Hata H."/>
            <person name="Watanabe M."/>
            <person name="Komatsu T."/>
            <person name="Mizushima-Sugano J."/>
            <person name="Satoh T."/>
            <person name="Shirai Y."/>
            <person name="Takahashi Y."/>
            <person name="Nakagawa K."/>
            <person name="Okumura K."/>
            <person name="Nagase T."/>
            <person name="Nomura N."/>
            <person name="Kikuchi H."/>
            <person name="Masuho Y."/>
            <person name="Yamashita R."/>
            <person name="Nakai K."/>
            <person name="Yada T."/>
            <person name="Nakamura Y."/>
            <person name="Ohara O."/>
            <person name="Isogai T."/>
            <person name="Sugano S."/>
        </authorList>
    </citation>
    <scope>NUCLEOTIDE SEQUENCE [LARGE SCALE MRNA]</scope>
    <scope>VARIANT TRP-79</scope>
    <source>
        <tissue>Urinary bladder</tissue>
    </source>
</reference>
<reference key="3">
    <citation type="journal article" date="2006" name="Nature">
        <title>The DNA sequence and biological annotation of human chromosome 1.</title>
        <authorList>
            <person name="Gregory S.G."/>
            <person name="Barlow K.F."/>
            <person name="McLay K.E."/>
            <person name="Kaul R."/>
            <person name="Swarbreck D."/>
            <person name="Dunham A."/>
            <person name="Scott C.E."/>
            <person name="Howe K.L."/>
            <person name="Woodfine K."/>
            <person name="Spencer C.C.A."/>
            <person name="Jones M.C."/>
            <person name="Gillson C."/>
            <person name="Searle S."/>
            <person name="Zhou Y."/>
            <person name="Kokocinski F."/>
            <person name="McDonald L."/>
            <person name="Evans R."/>
            <person name="Phillips K."/>
            <person name="Atkinson A."/>
            <person name="Cooper R."/>
            <person name="Jones C."/>
            <person name="Hall R.E."/>
            <person name="Andrews T.D."/>
            <person name="Lloyd C."/>
            <person name="Ainscough R."/>
            <person name="Almeida J.P."/>
            <person name="Ambrose K.D."/>
            <person name="Anderson F."/>
            <person name="Andrew R.W."/>
            <person name="Ashwell R.I.S."/>
            <person name="Aubin K."/>
            <person name="Babbage A.K."/>
            <person name="Bagguley C.L."/>
            <person name="Bailey J."/>
            <person name="Beasley H."/>
            <person name="Bethel G."/>
            <person name="Bird C.P."/>
            <person name="Bray-Allen S."/>
            <person name="Brown J.Y."/>
            <person name="Brown A.J."/>
            <person name="Buckley D."/>
            <person name="Burton J."/>
            <person name="Bye J."/>
            <person name="Carder C."/>
            <person name="Chapman J.C."/>
            <person name="Clark S.Y."/>
            <person name="Clarke G."/>
            <person name="Clee C."/>
            <person name="Cobley V."/>
            <person name="Collier R.E."/>
            <person name="Corby N."/>
            <person name="Coville G.J."/>
            <person name="Davies J."/>
            <person name="Deadman R."/>
            <person name="Dunn M."/>
            <person name="Earthrowl M."/>
            <person name="Ellington A.G."/>
            <person name="Errington H."/>
            <person name="Frankish A."/>
            <person name="Frankland J."/>
            <person name="French L."/>
            <person name="Garner P."/>
            <person name="Garnett J."/>
            <person name="Gay L."/>
            <person name="Ghori M.R.J."/>
            <person name="Gibson R."/>
            <person name="Gilby L.M."/>
            <person name="Gillett W."/>
            <person name="Glithero R.J."/>
            <person name="Grafham D.V."/>
            <person name="Griffiths C."/>
            <person name="Griffiths-Jones S."/>
            <person name="Grocock R."/>
            <person name="Hammond S."/>
            <person name="Harrison E.S.I."/>
            <person name="Hart E."/>
            <person name="Haugen E."/>
            <person name="Heath P.D."/>
            <person name="Holmes S."/>
            <person name="Holt K."/>
            <person name="Howden P.J."/>
            <person name="Hunt A.R."/>
            <person name="Hunt S.E."/>
            <person name="Hunter G."/>
            <person name="Isherwood J."/>
            <person name="James R."/>
            <person name="Johnson C."/>
            <person name="Johnson D."/>
            <person name="Joy A."/>
            <person name="Kay M."/>
            <person name="Kershaw J.K."/>
            <person name="Kibukawa M."/>
            <person name="Kimberley A.M."/>
            <person name="King A."/>
            <person name="Knights A.J."/>
            <person name="Lad H."/>
            <person name="Laird G."/>
            <person name="Lawlor S."/>
            <person name="Leongamornlert D.A."/>
            <person name="Lloyd D.M."/>
            <person name="Loveland J."/>
            <person name="Lovell J."/>
            <person name="Lush M.J."/>
            <person name="Lyne R."/>
            <person name="Martin S."/>
            <person name="Mashreghi-Mohammadi M."/>
            <person name="Matthews L."/>
            <person name="Matthews N.S.W."/>
            <person name="McLaren S."/>
            <person name="Milne S."/>
            <person name="Mistry S."/>
            <person name="Moore M.J.F."/>
            <person name="Nickerson T."/>
            <person name="O'Dell C.N."/>
            <person name="Oliver K."/>
            <person name="Palmeiri A."/>
            <person name="Palmer S.A."/>
            <person name="Parker A."/>
            <person name="Patel D."/>
            <person name="Pearce A.V."/>
            <person name="Peck A.I."/>
            <person name="Pelan S."/>
            <person name="Phelps K."/>
            <person name="Phillimore B.J."/>
            <person name="Plumb R."/>
            <person name="Rajan J."/>
            <person name="Raymond C."/>
            <person name="Rouse G."/>
            <person name="Saenphimmachak C."/>
            <person name="Sehra H.K."/>
            <person name="Sheridan E."/>
            <person name="Shownkeen R."/>
            <person name="Sims S."/>
            <person name="Skuce C.D."/>
            <person name="Smith M."/>
            <person name="Steward C."/>
            <person name="Subramanian S."/>
            <person name="Sycamore N."/>
            <person name="Tracey A."/>
            <person name="Tromans A."/>
            <person name="Van Helmond Z."/>
            <person name="Wall M."/>
            <person name="Wallis J.M."/>
            <person name="White S."/>
            <person name="Whitehead S.L."/>
            <person name="Wilkinson J.E."/>
            <person name="Willey D.L."/>
            <person name="Williams H."/>
            <person name="Wilming L."/>
            <person name="Wray P.W."/>
            <person name="Wu Z."/>
            <person name="Coulson A."/>
            <person name="Vaudin M."/>
            <person name="Sulston J.E."/>
            <person name="Durbin R.M."/>
            <person name="Hubbard T."/>
            <person name="Wooster R."/>
            <person name="Dunham I."/>
            <person name="Carter N.P."/>
            <person name="McVean G."/>
            <person name="Ross M.T."/>
            <person name="Harrow J."/>
            <person name="Olson M.V."/>
            <person name="Beck S."/>
            <person name="Rogers J."/>
            <person name="Bentley D.R."/>
        </authorList>
    </citation>
    <scope>NUCLEOTIDE SEQUENCE [LARGE SCALE GENOMIC DNA]</scope>
    <scope>VARIANT TRP-79</scope>
</reference>
<reference key="4">
    <citation type="submission" date="2005-07" db="EMBL/GenBank/DDBJ databases">
        <authorList>
            <person name="Mural R.J."/>
            <person name="Istrail S."/>
            <person name="Sutton G.G."/>
            <person name="Florea L."/>
            <person name="Halpern A.L."/>
            <person name="Mobarry C.M."/>
            <person name="Lippert R."/>
            <person name="Walenz B."/>
            <person name="Shatkay H."/>
            <person name="Dew I."/>
            <person name="Miller J.R."/>
            <person name="Flanigan M.J."/>
            <person name="Edwards N.J."/>
            <person name="Bolanos R."/>
            <person name="Fasulo D."/>
            <person name="Halldorsson B.V."/>
            <person name="Hannenhalli S."/>
            <person name="Turner R."/>
            <person name="Yooseph S."/>
            <person name="Lu F."/>
            <person name="Nusskern D.R."/>
            <person name="Shue B.C."/>
            <person name="Zheng X.H."/>
            <person name="Zhong F."/>
            <person name="Delcher A.L."/>
            <person name="Huson D.H."/>
            <person name="Kravitz S.A."/>
            <person name="Mouchard L."/>
            <person name="Reinert K."/>
            <person name="Remington K.A."/>
            <person name="Clark A.G."/>
            <person name="Waterman M.S."/>
            <person name="Eichler E.E."/>
            <person name="Adams M.D."/>
            <person name="Hunkapiller M.W."/>
            <person name="Myers E.W."/>
            <person name="Venter J.C."/>
        </authorList>
    </citation>
    <scope>NUCLEOTIDE SEQUENCE [LARGE SCALE GENOMIC DNA]</scope>
</reference>
<reference key="5">
    <citation type="journal article" date="2004" name="Genome Res.">
        <title>The status, quality, and expansion of the NIH full-length cDNA project: the Mammalian Gene Collection (MGC).</title>
        <authorList>
            <consortium name="The MGC Project Team"/>
        </authorList>
    </citation>
    <scope>NUCLEOTIDE SEQUENCE [LARGE SCALE MRNA]</scope>
    <scope>VARIANT TRP-79</scope>
    <source>
        <tissue>Pancreas</tissue>
    </source>
</reference>
<reference key="6">
    <citation type="journal article" date="1987" name="Biochemistry">
        <title>Primary structure of human pancreatic protease E determined by sequence analysis of the cloned mRNA.</title>
        <authorList>
            <person name="Shen W."/>
            <person name="Fletcher T.S."/>
            <person name="Largman C."/>
        </authorList>
    </citation>
    <scope>NUCLEOTIDE SEQUENCE [MRNA] OF 4-270</scope>
    <source>
        <tissue>Pancreas</tissue>
    </source>
</reference>
<reference key="7">
    <citation type="journal article" date="1989" name="Biochem. Biophys. Res. Commun.">
        <title>Generation of a subunit III-like protein by autolysis of human and porcine proproteinase E in a binary complex with procarboxypeptidase A.</title>
        <authorList>
            <person name="Aviles F.X."/>
            <person name="Pascual R."/>
            <person name="Salva M."/>
            <person name="Bonicel J."/>
            <person name="Puigserver A."/>
        </authorList>
    </citation>
    <scope>PROTEIN SEQUENCE OF 18-57</scope>
</reference>
<reference key="8">
    <citation type="journal article" date="1988" name="Biochem. Biophys. Res. Commun.">
        <title>Characterization of two glycoproteins of human pancreatic juice: P35, a truncated protease E and P19, precursor of protein X.</title>
        <authorList>
            <person name="Guy-Crotte O."/>
            <person name="Barthe C."/>
            <person name="Basso D."/>
            <person name="Fournet B."/>
            <person name="Figarella C."/>
        </authorList>
    </citation>
    <scope>PROTEIN SEQUENCE OF 31-63</scope>
</reference>
<reference key="9">
    <citation type="journal article" date="1989" name="FEBS Lett.">
        <title>Identification of a procarboxypeptidase A-truncated protease E binary complex in human pancreatic juice.</title>
        <authorList>
            <person name="Moulard M."/>
            <person name="Kerfelec B."/>
            <person name="Mallet B."/>
            <person name="Chapus C."/>
        </authorList>
    </citation>
    <scope>PROTEIN SEQUENCE OF 31-50</scope>
    <source>
        <tissue>Pancreas</tissue>
    </source>
</reference>
<reference key="10">
    <citation type="journal article" date="1989" name="FEBS Lett.">
        <title>Localization and characterization of the glycosylation site of human pancreatic elastase 1.</title>
        <authorList>
            <person name="Wendorf P."/>
            <person name="Geyer R."/>
            <person name="Sziegoleit A."/>
            <person name="Linder D."/>
        </authorList>
    </citation>
    <scope>PROTEIN SEQUENCE OF 94-164</scope>
    <scope>GLYCOSYLATION AT ASN-114</scope>
    <source>
        <tissue>Pancreas</tissue>
    </source>
</reference>
<reference key="11">
    <citation type="journal article" date="2000" name="J. Invest. Dermatol.">
        <title>Human elastase 1: evidence for expression in the skin and the identification of a frequent frameshift polymorphism.</title>
        <authorList>
            <person name="Talas U."/>
            <person name="Dunlop J."/>
            <person name="Khalaf S."/>
            <person name="Leigh I.M."/>
            <person name="Kelsell D.P."/>
        </authorList>
    </citation>
    <scope>TISSUE SPECIFICITY</scope>
</reference>
<dbReference type="EC" id="3.4.21.70"/>
<dbReference type="EMBL" id="M16630">
    <property type="protein sequence ID" value="AAA36482.1"/>
    <property type="molecule type" value="mRNA"/>
</dbReference>
<dbReference type="EMBL" id="AK315798">
    <property type="protein sequence ID" value="BAG38141.1"/>
    <property type="molecule type" value="mRNA"/>
</dbReference>
<dbReference type="EMBL" id="AL590556">
    <property type="status" value="NOT_ANNOTATED_CDS"/>
    <property type="molecule type" value="Genomic_DNA"/>
</dbReference>
<dbReference type="EMBL" id="CH471134">
    <property type="protein sequence ID" value="EAW94999.1"/>
    <property type="molecule type" value="Genomic_DNA"/>
</dbReference>
<dbReference type="EMBL" id="BC005216">
    <property type="protein sequence ID" value="AAH05216.1"/>
    <property type="molecule type" value="mRNA"/>
</dbReference>
<dbReference type="EMBL" id="M18692">
    <property type="protein sequence ID" value="AAA58454.1"/>
    <property type="molecule type" value="mRNA"/>
</dbReference>
<dbReference type="CCDS" id="CCDS219.1"/>
<dbReference type="PIR" id="B29934">
    <property type="entry name" value="B29934"/>
</dbReference>
<dbReference type="RefSeq" id="NP_031378.1">
    <property type="nucleotide sequence ID" value="NM_007352.4"/>
</dbReference>
<dbReference type="SMR" id="P08861"/>
<dbReference type="BioGRID" id="117004">
    <property type="interactions" value="16"/>
</dbReference>
<dbReference type="FunCoup" id="P08861">
    <property type="interactions" value="230"/>
</dbReference>
<dbReference type="IntAct" id="P08861">
    <property type="interactions" value="12"/>
</dbReference>
<dbReference type="STRING" id="9606.ENSP00000338369"/>
<dbReference type="MEROPS" id="S01.205"/>
<dbReference type="GlyConnect" id="125">
    <property type="glycosylation" value="19 N-Linked glycans (1 site)"/>
</dbReference>
<dbReference type="GlyCosmos" id="P08861">
    <property type="glycosylation" value="1 site, 40 glycans"/>
</dbReference>
<dbReference type="GlyGen" id="P08861">
    <property type="glycosylation" value="1 site, 40 N-linked glycans (1 site)"/>
</dbReference>
<dbReference type="iPTMnet" id="P08861"/>
<dbReference type="PhosphoSitePlus" id="P08861"/>
<dbReference type="BioMuta" id="CELA3B"/>
<dbReference type="DMDM" id="317373457"/>
<dbReference type="MassIVE" id="P08861"/>
<dbReference type="PaxDb" id="9606-ENSP00000338369"/>
<dbReference type="PeptideAtlas" id="P08861"/>
<dbReference type="ProteomicsDB" id="52169"/>
<dbReference type="Antibodypedia" id="30049">
    <property type="antibodies" value="744 antibodies from 23 providers"/>
</dbReference>
<dbReference type="DNASU" id="23436"/>
<dbReference type="Ensembl" id="ENST00000337107.11">
    <property type="protein sequence ID" value="ENSP00000338369.6"/>
    <property type="gene ID" value="ENSG00000219073.8"/>
</dbReference>
<dbReference type="GeneID" id="23436"/>
<dbReference type="KEGG" id="hsa:23436"/>
<dbReference type="MANE-Select" id="ENST00000337107.11">
    <property type="protein sequence ID" value="ENSP00000338369.6"/>
    <property type="RefSeq nucleotide sequence ID" value="NM_007352.4"/>
    <property type="RefSeq protein sequence ID" value="NP_031378.1"/>
</dbReference>
<dbReference type="UCSC" id="uc001bfk.4">
    <property type="organism name" value="human"/>
</dbReference>
<dbReference type="AGR" id="HGNC:15945"/>
<dbReference type="CTD" id="23436"/>
<dbReference type="DisGeNET" id="23436"/>
<dbReference type="GeneCards" id="CELA3B"/>
<dbReference type="HGNC" id="HGNC:15945">
    <property type="gene designation" value="CELA3B"/>
</dbReference>
<dbReference type="HPA" id="ENSG00000219073">
    <property type="expression patterns" value="Tissue enriched (pancreas)"/>
</dbReference>
<dbReference type="MIM" id="618694">
    <property type="type" value="gene"/>
</dbReference>
<dbReference type="neXtProt" id="NX_P08861"/>
<dbReference type="OpenTargets" id="ENSG00000219073"/>
<dbReference type="PharmGKB" id="PA27737"/>
<dbReference type="VEuPathDB" id="HostDB:ENSG00000219073"/>
<dbReference type="eggNOG" id="KOG3627">
    <property type="taxonomic scope" value="Eukaryota"/>
</dbReference>
<dbReference type="GeneTree" id="ENSGT01030000234528"/>
<dbReference type="HOGENOM" id="CLU_006842_0_4_1"/>
<dbReference type="InParanoid" id="P08861"/>
<dbReference type="OMA" id="KNGSFHH"/>
<dbReference type="OrthoDB" id="10061449at2759"/>
<dbReference type="PAN-GO" id="P08861">
    <property type="GO annotations" value="3 GO annotations based on evolutionary models"/>
</dbReference>
<dbReference type="PhylomeDB" id="P08861"/>
<dbReference type="TreeFam" id="TF330455"/>
<dbReference type="PathwayCommons" id="P08861"/>
<dbReference type="Reactome" id="R-HSA-9925561">
    <property type="pathway name" value="Developmental Lineage of Pancreatic Acinar Cells"/>
</dbReference>
<dbReference type="BioGRID-ORCS" id="23436">
    <property type="hits" value="7 hits in 1077 CRISPR screens"/>
</dbReference>
<dbReference type="GeneWiki" id="CELA3B"/>
<dbReference type="GenomeRNAi" id="23436"/>
<dbReference type="Pharos" id="P08861">
    <property type="development level" value="Tbio"/>
</dbReference>
<dbReference type="PRO" id="PR:P08861"/>
<dbReference type="Proteomes" id="UP000005640">
    <property type="component" value="Chromosome 1"/>
</dbReference>
<dbReference type="RNAct" id="P08861">
    <property type="molecule type" value="protein"/>
</dbReference>
<dbReference type="Bgee" id="ENSG00000219073">
    <property type="expression patterns" value="Expressed in body of pancreas and 88 other cell types or tissues"/>
</dbReference>
<dbReference type="ExpressionAtlas" id="P08861">
    <property type="expression patterns" value="baseline and differential"/>
</dbReference>
<dbReference type="GO" id="GO:0005615">
    <property type="term" value="C:extracellular space"/>
    <property type="evidence" value="ECO:0000318"/>
    <property type="project" value="GO_Central"/>
</dbReference>
<dbReference type="GO" id="GO:0008233">
    <property type="term" value="F:peptidase activity"/>
    <property type="evidence" value="ECO:0000304"/>
    <property type="project" value="ProtInc"/>
</dbReference>
<dbReference type="GO" id="GO:0004252">
    <property type="term" value="F:serine-type endopeptidase activity"/>
    <property type="evidence" value="ECO:0000318"/>
    <property type="project" value="GO_Central"/>
</dbReference>
<dbReference type="GO" id="GO:0006508">
    <property type="term" value="P:proteolysis"/>
    <property type="evidence" value="ECO:0000318"/>
    <property type="project" value="GO_Central"/>
</dbReference>
<dbReference type="CDD" id="cd00190">
    <property type="entry name" value="Tryp_SPc"/>
    <property type="match status" value="1"/>
</dbReference>
<dbReference type="FunFam" id="2.40.10.10:FF:000280">
    <property type="match status" value="1"/>
</dbReference>
<dbReference type="FunFam" id="2.40.10.10:FF:000004">
    <property type="entry name" value="Tryptase gamma 1"/>
    <property type="match status" value="1"/>
</dbReference>
<dbReference type="Gene3D" id="2.40.10.10">
    <property type="entry name" value="Trypsin-like serine proteases"/>
    <property type="match status" value="2"/>
</dbReference>
<dbReference type="InterPro" id="IPR050850">
    <property type="entry name" value="Peptidase_S1_Elastase_sf"/>
</dbReference>
<dbReference type="InterPro" id="IPR009003">
    <property type="entry name" value="Peptidase_S1_PA"/>
</dbReference>
<dbReference type="InterPro" id="IPR043504">
    <property type="entry name" value="Peptidase_S1_PA_chymotrypsin"/>
</dbReference>
<dbReference type="InterPro" id="IPR001314">
    <property type="entry name" value="Peptidase_S1A"/>
</dbReference>
<dbReference type="InterPro" id="IPR001254">
    <property type="entry name" value="Trypsin_dom"/>
</dbReference>
<dbReference type="InterPro" id="IPR018114">
    <property type="entry name" value="TRYPSIN_HIS"/>
</dbReference>
<dbReference type="InterPro" id="IPR033116">
    <property type="entry name" value="TRYPSIN_SER"/>
</dbReference>
<dbReference type="PANTHER" id="PTHR24257">
    <property type="entry name" value="CHYMOTRYPSIN-LIKE ELASTASE FAMILY MEMBER"/>
    <property type="match status" value="1"/>
</dbReference>
<dbReference type="PANTHER" id="PTHR24257:SF22">
    <property type="entry name" value="CHYMOTRYPSIN-LIKE ELASTASE FAMILY MEMBER 3B"/>
    <property type="match status" value="1"/>
</dbReference>
<dbReference type="Pfam" id="PF00089">
    <property type="entry name" value="Trypsin"/>
    <property type="match status" value="1"/>
</dbReference>
<dbReference type="PRINTS" id="PR00722">
    <property type="entry name" value="CHYMOTRYPSIN"/>
</dbReference>
<dbReference type="SMART" id="SM00020">
    <property type="entry name" value="Tryp_SPc"/>
    <property type="match status" value="1"/>
</dbReference>
<dbReference type="SUPFAM" id="SSF50494">
    <property type="entry name" value="Trypsin-like serine proteases"/>
    <property type="match status" value="1"/>
</dbReference>
<dbReference type="PROSITE" id="PS50240">
    <property type="entry name" value="TRYPSIN_DOM"/>
    <property type="match status" value="1"/>
</dbReference>
<dbReference type="PROSITE" id="PS00134">
    <property type="entry name" value="TRYPSIN_HIS"/>
    <property type="match status" value="1"/>
</dbReference>
<dbReference type="PROSITE" id="PS00135">
    <property type="entry name" value="TRYPSIN_SER"/>
    <property type="match status" value="1"/>
</dbReference>
<gene>
    <name type="primary">CELA3B</name>
    <name type="synonym">ELA3B</name>
</gene>
<organism>
    <name type="scientific">Homo sapiens</name>
    <name type="common">Human</name>
    <dbReference type="NCBI Taxonomy" id="9606"/>
    <lineage>
        <taxon>Eukaryota</taxon>
        <taxon>Metazoa</taxon>
        <taxon>Chordata</taxon>
        <taxon>Craniata</taxon>
        <taxon>Vertebrata</taxon>
        <taxon>Euteleostomi</taxon>
        <taxon>Mammalia</taxon>
        <taxon>Eutheria</taxon>
        <taxon>Euarchontoglires</taxon>
        <taxon>Primates</taxon>
        <taxon>Haplorrhini</taxon>
        <taxon>Catarrhini</taxon>
        <taxon>Hominidae</taxon>
        <taxon>Homo</taxon>
    </lineage>
</organism>
<proteinExistence type="evidence at protein level"/>
<keyword id="KW-0903">Direct protein sequencing</keyword>
<keyword id="KW-1015">Disulfide bond</keyword>
<keyword id="KW-0325">Glycoprotein</keyword>
<keyword id="KW-0378">Hydrolase</keyword>
<keyword id="KW-0645">Protease</keyword>
<keyword id="KW-1267">Proteomics identification</keyword>
<keyword id="KW-1185">Reference proteome</keyword>
<keyword id="KW-0720">Serine protease</keyword>
<keyword id="KW-0732">Signal</keyword>
<keyword id="KW-0865">Zymogen</keyword>
<comment type="function">
    <text>Efficient protease with alanine specificity but only little elastolytic activity.</text>
</comment>
<comment type="catalytic activity">
    <reaction>
        <text>Preferential cleavage: Ala-|-Xaa. Does not hydrolyze elastin.</text>
        <dbReference type="EC" id="3.4.21.70"/>
    </reaction>
</comment>
<comment type="tissue specificity">
    <text evidence="4">Pancreas. Not detectable in keratinocytes.</text>
</comment>
<comment type="similarity">
    <text evidence="3">Belongs to the peptidase S1 family. Elastase subfamily.</text>
</comment>
<comment type="caution">
    <text evidence="10">Was originally thought to be elastase 1.</text>
</comment>
<protein>
    <recommendedName>
        <fullName>Chymotrypsin-like elastase family member 3B</fullName>
        <ecNumber>3.4.21.70</ecNumber>
    </recommendedName>
    <alternativeName>
        <fullName>Elastase IIIB</fullName>
    </alternativeName>
    <alternativeName>
        <fullName>Elastase-3B</fullName>
    </alternativeName>
    <alternativeName>
        <fullName>Protease E</fullName>
    </alternativeName>
</protein>
<feature type="signal peptide" description="Or 16" evidence="2">
    <location>
        <begin position="1"/>
        <end position="15"/>
    </location>
</feature>
<feature type="propeptide" id="PRO_0000027699" description="Activation peptide" evidence="2">
    <location>
        <begin position="16"/>
        <end position="28"/>
    </location>
</feature>
<feature type="chain" id="PRO_0000027700" description="Chymotrypsin-like elastase family member 3B">
    <location>
        <begin position="29"/>
        <end position="270"/>
    </location>
</feature>
<feature type="domain" description="Peptidase S1" evidence="3">
    <location>
        <begin position="29"/>
        <end position="268"/>
    </location>
</feature>
<feature type="active site" description="Charge relay system" evidence="1">
    <location>
        <position position="73"/>
    </location>
</feature>
<feature type="active site" description="Charge relay system" evidence="1">
    <location>
        <position position="123"/>
    </location>
</feature>
<feature type="active site" description="Charge relay system" evidence="1">
    <location>
        <position position="217"/>
    </location>
</feature>
<feature type="glycosylation site" id="CAR_000212" description="N-linked (GlcNAc...) asparagine" evidence="8">
    <location>
        <position position="114"/>
    </location>
</feature>
<feature type="disulfide bond" evidence="3">
    <location>
        <begin position="58"/>
        <end position="74"/>
    </location>
</feature>
<feature type="disulfide bond" evidence="9">
    <location>
        <begin position="117"/>
        <end position="120"/>
    </location>
</feature>
<feature type="disulfide bond" evidence="3">
    <location>
        <begin position="157"/>
        <end position="223"/>
    </location>
</feature>
<feature type="disulfide bond" evidence="3">
    <location>
        <begin position="188"/>
        <end position="204"/>
    </location>
</feature>
<feature type="disulfide bond" evidence="3">
    <location>
        <begin position="213"/>
        <end position="244"/>
    </location>
</feature>
<feature type="sequence variant" id="VAR_025446" description="In dbSNP:rs7528405." evidence="5 6 7">
    <original>R</original>
    <variation>W</variation>
    <location>
        <position position="79"/>
    </location>
</feature>
<feature type="sequence conflict" description="In Ref. 5; AAA36482." evidence="9" ref="5">
    <original>R</original>
    <variation>G</variation>
    <location>
        <position position="4"/>
    </location>
</feature>
<feature type="sequence conflict" description="In Ref. 5; AAA36482." evidence="9" ref="5">
    <original>A</original>
    <variation>G</variation>
    <location>
        <position position="64"/>
    </location>
</feature>
<feature type="sequence conflict" description="In Ref. 10; AA sequence." evidence="9" ref="10">
    <location>
        <begin position="129"/>
        <end position="131"/>
    </location>
</feature>
<feature type="sequence conflict" description="In Ref. 5; AAA36482." evidence="9" ref="5">
    <original>R</original>
    <variation>P</variation>
    <location>
        <position position="164"/>
    </location>
</feature>
<accession>P08861</accession>
<accession>B2RE44</accession>
<accession>P11423</accession>
<accession>Q5VU28</accession>
<accession>Q5VU29</accession>
<accession>Q5VU30</accession>